<organism>
    <name type="scientific">Pseudomonas putida (strain ATCC 47054 / DSM 6125 / CFBP 8728 / NCIMB 11950 / KT2440)</name>
    <dbReference type="NCBI Taxonomy" id="160488"/>
    <lineage>
        <taxon>Bacteria</taxon>
        <taxon>Pseudomonadati</taxon>
        <taxon>Pseudomonadota</taxon>
        <taxon>Gammaproteobacteria</taxon>
        <taxon>Pseudomonadales</taxon>
        <taxon>Pseudomonadaceae</taxon>
        <taxon>Pseudomonas</taxon>
    </lineage>
</organism>
<protein>
    <recommendedName>
        <fullName>RNA polymerase sigma-54 factor</fullName>
    </recommendedName>
</protein>
<proteinExistence type="evidence at protein level"/>
<reference key="1">
    <citation type="journal article" date="1989" name="Nucleic Acids Res.">
        <title>Nucleotide and deduced amino acid sequence of the RpoN sigma-factor of Pseudomonas putida.</title>
        <authorList>
            <person name="Koehler T."/>
            <person name="Cayrol J.M."/>
            <person name="Ramos J.L."/>
            <person name="Harayama S."/>
        </authorList>
    </citation>
    <scope>NUCLEOTIDE SEQUENCE [GENOMIC DNA]</scope>
</reference>
<reference key="2">
    <citation type="journal article" date="2002" name="Environ. Microbiol.">
        <title>Complete genome sequence and comparative analysis of the metabolically versatile Pseudomonas putida KT2440.</title>
        <authorList>
            <person name="Nelson K.E."/>
            <person name="Weinel C."/>
            <person name="Paulsen I.T."/>
            <person name="Dodson R.J."/>
            <person name="Hilbert H."/>
            <person name="Martins dos Santos V.A.P."/>
            <person name="Fouts D.E."/>
            <person name="Gill S.R."/>
            <person name="Pop M."/>
            <person name="Holmes M."/>
            <person name="Brinkac L.M."/>
            <person name="Beanan M.J."/>
            <person name="DeBoy R.T."/>
            <person name="Daugherty S.C."/>
            <person name="Kolonay J.F."/>
            <person name="Madupu R."/>
            <person name="Nelson W.C."/>
            <person name="White O."/>
            <person name="Peterson J.D."/>
            <person name="Khouri H.M."/>
            <person name="Hance I."/>
            <person name="Chris Lee P."/>
            <person name="Holtzapple E.K."/>
            <person name="Scanlan D."/>
            <person name="Tran K."/>
            <person name="Moazzez A."/>
            <person name="Utterback T.R."/>
            <person name="Rizzo M."/>
            <person name="Lee K."/>
            <person name="Kosack D."/>
            <person name="Moestl D."/>
            <person name="Wedler H."/>
            <person name="Lauber J."/>
            <person name="Stjepandic D."/>
            <person name="Hoheisel J."/>
            <person name="Straetz M."/>
            <person name="Heim S."/>
            <person name="Kiewitz C."/>
            <person name="Eisen J.A."/>
            <person name="Timmis K.N."/>
            <person name="Duesterhoeft A."/>
            <person name="Tuemmler B."/>
            <person name="Fraser C.M."/>
        </authorList>
    </citation>
    <scope>NUCLEOTIDE SEQUENCE [LARGE SCALE GENOMIC DNA]</scope>
    <source>
        <strain>ATCC 47054 / DSM 6125 / CFBP 8728 / NCIMB 11950 / KT2440</strain>
    </source>
</reference>
<name>RP54_PSEPK</name>
<feature type="chain" id="PRO_0000205535" description="RNA polymerase sigma-54 factor">
    <location>
        <begin position="1"/>
        <end position="497"/>
    </location>
</feature>
<feature type="DNA-binding region" description="H-T-H motif" evidence="1">
    <location>
        <begin position="386"/>
        <end position="405"/>
    </location>
</feature>
<feature type="region of interest" description="Disordered" evidence="2">
    <location>
        <begin position="41"/>
        <end position="101"/>
    </location>
</feature>
<feature type="short sequence motif" description="RPON box">
    <location>
        <begin position="474"/>
        <end position="482"/>
    </location>
</feature>
<feature type="compositionally biased region" description="Polar residues" evidence="2">
    <location>
        <begin position="75"/>
        <end position="86"/>
    </location>
</feature>
<feature type="sequence conflict" description="In Ref. 1; CAA34494." evidence="3" ref="1">
    <original>C</original>
    <variation>S</variation>
    <location>
        <position position="181"/>
    </location>
</feature>
<feature type="sequence conflict" description="In Ref. 1; CAA34494." evidence="3" ref="1">
    <original>Q</original>
    <variation>R</variation>
    <location>
        <position position="366"/>
    </location>
</feature>
<keyword id="KW-0238">DNA-binding</keyword>
<keyword id="KW-0240">DNA-directed RNA polymerase</keyword>
<keyword id="KW-0548">Nucleotidyltransferase</keyword>
<keyword id="KW-1185">Reference proteome</keyword>
<keyword id="KW-0731">Sigma factor</keyword>
<keyword id="KW-0804">Transcription</keyword>
<keyword id="KW-0805">Transcription regulation</keyword>
<keyword id="KW-0808">Transferase</keyword>
<evidence type="ECO:0000255" key="1"/>
<evidence type="ECO:0000256" key="2">
    <source>
        <dbReference type="SAM" id="MobiDB-lite"/>
    </source>
</evidence>
<evidence type="ECO:0000305" key="3"/>
<gene>
    <name type="primary">rpoN</name>
    <name type="synonym">ntrA</name>
    <name type="ordered locus">PP_0952</name>
</gene>
<sequence length="497" mass="56215">MKPSLVLKMGQQLTMTPQLQQAIRLLQLSTLDLQQEIQEALESNPMLERQEDGEDFDNSDPMADNAENKPAAEVQDNSFQESTVSADNLEDGEWSERIPNELPVDTAWEDIYQTSASSLPSNDDDEWDFTTRTSAGESLQSHLLWQLNLAPMSDTDRLIAVTLIDSINGQGYLEDTLEEICAGFDPELDIELDEVEAVLHRIQQFEPAGVGARNLGECLLLQLRQLPATTPWMTEAKRLVTDFIDLLGSRDYSQLMRRMKIKEDELRQVIELVQSLNPRPGSQIESSEPEYVVPDVIVRKDSDRWLVELNQEAIPRLRVNPQYAGFVRRADTSADNTFMRNQLQEARWFIKSLQSRNETLMKVATQIVEHQRGFLDHGDEAMKPLVLHDIAEAVGMHESTISRVTTQKYMHTPRGIYELKYFFSSHVSTSEGGECSSTAIRAIIKKLVAAENQKKPLSDSKIAGLLEAQGIQVARRTVAKYRESLGIAPSSERKRLM</sequence>
<comment type="function">
    <text>Sigma factors are initiation factors that promote the attachment of RNA polymerase to specific initiation sites and are then released. This sigma factor is responsible for the expression of the xylCAB operon and the xylS gene. The open complex (sigma-54 and core RNA polymerase) serves as the receptor for receipt of the melting signal from the remotely bound activator protein XylR for the expression of the xylCAB operon and xylS.</text>
</comment>
<comment type="interaction">
    <interactant intactId="EBI-8302876">
        <id>P0A171</id>
    </interactant>
    <interactant intactId="EBI-8302876">
        <id>P0A171</id>
        <label>rpoN</label>
    </interactant>
    <organismsDiffer>false</organismsDiffer>
    <experiments>6</experiments>
</comment>
<comment type="similarity">
    <text evidence="3">Belongs to the sigma-54 factor family.</text>
</comment>
<accession>P0A171</accession>
<accession>P15591</accession>
<dbReference type="EMBL" id="X16474">
    <property type="protein sequence ID" value="CAA34494.1"/>
    <property type="molecule type" value="Genomic_DNA"/>
</dbReference>
<dbReference type="EMBL" id="AE015451">
    <property type="protein sequence ID" value="AAN66577.1"/>
    <property type="molecule type" value="Genomic_DNA"/>
</dbReference>
<dbReference type="PIR" id="T01753">
    <property type="entry name" value="T01753"/>
</dbReference>
<dbReference type="RefSeq" id="NP_743113.1">
    <property type="nucleotide sequence ID" value="NC_002947.4"/>
</dbReference>
<dbReference type="RefSeq" id="WP_003255133.1">
    <property type="nucleotide sequence ID" value="NZ_CP169744.1"/>
</dbReference>
<dbReference type="SMR" id="P0A171"/>
<dbReference type="MINT" id="P0A171"/>
<dbReference type="STRING" id="160488.PP_0952"/>
<dbReference type="PaxDb" id="160488-PP_0952"/>
<dbReference type="KEGG" id="ppu:PP_0952"/>
<dbReference type="PATRIC" id="fig|160488.4.peg.1013"/>
<dbReference type="eggNOG" id="COG1508">
    <property type="taxonomic scope" value="Bacteria"/>
</dbReference>
<dbReference type="HOGENOM" id="CLU_020569_0_1_6"/>
<dbReference type="OrthoDB" id="9814402at2"/>
<dbReference type="PhylomeDB" id="P0A171"/>
<dbReference type="BioCyc" id="PPUT160488:G1G01-1026-MONOMER"/>
<dbReference type="Proteomes" id="UP000000556">
    <property type="component" value="Chromosome"/>
</dbReference>
<dbReference type="GO" id="GO:0000428">
    <property type="term" value="C:DNA-directed RNA polymerase complex"/>
    <property type="evidence" value="ECO:0007669"/>
    <property type="project" value="UniProtKB-KW"/>
</dbReference>
<dbReference type="GO" id="GO:0032993">
    <property type="term" value="C:protein-DNA complex"/>
    <property type="evidence" value="ECO:0000353"/>
    <property type="project" value="CollecTF"/>
</dbReference>
<dbReference type="GO" id="GO:0001216">
    <property type="term" value="F:DNA-binding transcription activator activity"/>
    <property type="evidence" value="ECO:0000353"/>
    <property type="project" value="CollecTF"/>
</dbReference>
<dbReference type="GO" id="GO:0042802">
    <property type="term" value="F:identical protein binding"/>
    <property type="evidence" value="ECO:0000353"/>
    <property type="project" value="IntAct"/>
</dbReference>
<dbReference type="GO" id="GO:0016779">
    <property type="term" value="F:nucleotidyltransferase activity"/>
    <property type="evidence" value="ECO:0007669"/>
    <property type="project" value="UniProtKB-KW"/>
</dbReference>
<dbReference type="GO" id="GO:0016987">
    <property type="term" value="F:sigma factor activity"/>
    <property type="evidence" value="ECO:0007669"/>
    <property type="project" value="UniProtKB-KW"/>
</dbReference>
<dbReference type="GO" id="GO:0000976">
    <property type="term" value="F:transcription cis-regulatory region binding"/>
    <property type="evidence" value="ECO:0000353"/>
    <property type="project" value="CollecTF"/>
</dbReference>
<dbReference type="GO" id="GO:0006352">
    <property type="term" value="P:DNA-templated transcription initiation"/>
    <property type="evidence" value="ECO:0007669"/>
    <property type="project" value="InterPro"/>
</dbReference>
<dbReference type="GO" id="GO:0045893">
    <property type="term" value="P:positive regulation of DNA-templated transcription"/>
    <property type="evidence" value="ECO:0000314"/>
    <property type="project" value="CollecTF"/>
</dbReference>
<dbReference type="FunFam" id="1.10.10.1330:FF:000001">
    <property type="entry name" value="RNA polymerase sigma-54 factor"/>
    <property type="match status" value="1"/>
</dbReference>
<dbReference type="FunFam" id="1.10.10.60:FF:000045">
    <property type="entry name" value="RNA polymerase sigma-54 factor"/>
    <property type="match status" value="1"/>
</dbReference>
<dbReference type="Gene3D" id="1.10.10.60">
    <property type="entry name" value="Homeodomain-like"/>
    <property type="match status" value="1"/>
</dbReference>
<dbReference type="Gene3D" id="1.10.10.1330">
    <property type="entry name" value="RNA polymerase sigma-54 factor, core-binding domain"/>
    <property type="match status" value="1"/>
</dbReference>
<dbReference type="InterPro" id="IPR000394">
    <property type="entry name" value="RNA_pol_sigma_54"/>
</dbReference>
<dbReference type="InterPro" id="IPR007046">
    <property type="entry name" value="RNA_pol_sigma_54_core-bd"/>
</dbReference>
<dbReference type="InterPro" id="IPR007634">
    <property type="entry name" value="RNA_pol_sigma_54_DNA-bd"/>
</dbReference>
<dbReference type="InterPro" id="IPR038709">
    <property type="entry name" value="RpoN_core-bd_sf"/>
</dbReference>
<dbReference type="NCBIfam" id="NF004595">
    <property type="entry name" value="PRK05932.1-2"/>
    <property type="match status" value="1"/>
</dbReference>
<dbReference type="NCBIfam" id="NF009118">
    <property type="entry name" value="PRK12469.1"/>
    <property type="match status" value="1"/>
</dbReference>
<dbReference type="NCBIfam" id="TIGR02395">
    <property type="entry name" value="rpoN_sigma"/>
    <property type="match status" value="1"/>
</dbReference>
<dbReference type="PANTHER" id="PTHR32248">
    <property type="entry name" value="RNA POLYMERASE SIGMA-54 FACTOR"/>
    <property type="match status" value="1"/>
</dbReference>
<dbReference type="PANTHER" id="PTHR32248:SF4">
    <property type="entry name" value="RNA POLYMERASE SIGMA-54 FACTOR"/>
    <property type="match status" value="1"/>
</dbReference>
<dbReference type="Pfam" id="PF00309">
    <property type="entry name" value="Sigma54_AID"/>
    <property type="match status" value="1"/>
</dbReference>
<dbReference type="Pfam" id="PF04963">
    <property type="entry name" value="Sigma54_CBD"/>
    <property type="match status" value="1"/>
</dbReference>
<dbReference type="Pfam" id="PF04552">
    <property type="entry name" value="Sigma54_DBD"/>
    <property type="match status" value="1"/>
</dbReference>
<dbReference type="PIRSF" id="PIRSF000774">
    <property type="entry name" value="RpoN"/>
    <property type="match status" value="1"/>
</dbReference>
<dbReference type="PRINTS" id="PR00045">
    <property type="entry name" value="SIGMA54FCT"/>
</dbReference>
<dbReference type="PROSITE" id="PS00717">
    <property type="entry name" value="SIGMA54_1"/>
    <property type="match status" value="1"/>
</dbReference>
<dbReference type="PROSITE" id="PS00718">
    <property type="entry name" value="SIGMA54_2"/>
    <property type="match status" value="1"/>
</dbReference>
<dbReference type="PROSITE" id="PS50044">
    <property type="entry name" value="SIGMA54_3"/>
    <property type="match status" value="1"/>
</dbReference>